<organism>
    <name type="scientific">Pasteurella multocida (strain Pm70)</name>
    <dbReference type="NCBI Taxonomy" id="272843"/>
    <lineage>
        <taxon>Bacteria</taxon>
        <taxon>Pseudomonadati</taxon>
        <taxon>Pseudomonadota</taxon>
        <taxon>Gammaproteobacteria</taxon>
        <taxon>Pasteurellales</taxon>
        <taxon>Pasteurellaceae</taxon>
        <taxon>Pasteurella</taxon>
    </lineage>
</organism>
<dbReference type="EC" id="4.2.1.20"/>
<dbReference type="EMBL" id="U22344">
    <property type="protein sequence ID" value="AAC43609.1"/>
    <property type="molecule type" value="Genomic_DNA"/>
</dbReference>
<dbReference type="EMBL" id="AE004439">
    <property type="protein sequence ID" value="AAK02662.1"/>
    <property type="molecule type" value="Genomic_DNA"/>
</dbReference>
<dbReference type="RefSeq" id="WP_010906736.1">
    <property type="nucleotide sequence ID" value="NC_002663.1"/>
</dbReference>
<dbReference type="SMR" id="P54203"/>
<dbReference type="STRING" id="272843.PM0578"/>
<dbReference type="EnsemblBacteria" id="AAK02662">
    <property type="protein sequence ID" value="AAK02662"/>
    <property type="gene ID" value="PM0578"/>
</dbReference>
<dbReference type="KEGG" id="pmu:PM0578"/>
<dbReference type="PATRIC" id="fig|272843.6.peg.585"/>
<dbReference type="HOGENOM" id="CLU_016734_3_1_6"/>
<dbReference type="OrthoDB" id="9766131at2"/>
<dbReference type="UniPathway" id="UPA00035">
    <property type="reaction ID" value="UER00044"/>
</dbReference>
<dbReference type="Proteomes" id="UP000000809">
    <property type="component" value="Chromosome"/>
</dbReference>
<dbReference type="GO" id="GO:0005737">
    <property type="term" value="C:cytoplasm"/>
    <property type="evidence" value="ECO:0007669"/>
    <property type="project" value="TreeGrafter"/>
</dbReference>
<dbReference type="GO" id="GO:0004834">
    <property type="term" value="F:tryptophan synthase activity"/>
    <property type="evidence" value="ECO:0007669"/>
    <property type="project" value="UniProtKB-UniRule"/>
</dbReference>
<dbReference type="CDD" id="cd06446">
    <property type="entry name" value="Trp-synth_B"/>
    <property type="match status" value="1"/>
</dbReference>
<dbReference type="FunFam" id="3.40.50.1100:FF:000001">
    <property type="entry name" value="Tryptophan synthase beta chain"/>
    <property type="match status" value="1"/>
</dbReference>
<dbReference type="FunFam" id="3.40.50.1100:FF:000004">
    <property type="entry name" value="Tryptophan synthase beta chain"/>
    <property type="match status" value="1"/>
</dbReference>
<dbReference type="Gene3D" id="3.40.50.1100">
    <property type="match status" value="2"/>
</dbReference>
<dbReference type="HAMAP" id="MF_00133">
    <property type="entry name" value="Trp_synth_beta"/>
    <property type="match status" value="1"/>
</dbReference>
<dbReference type="InterPro" id="IPR006653">
    <property type="entry name" value="Trp_synth_b_CS"/>
</dbReference>
<dbReference type="InterPro" id="IPR006654">
    <property type="entry name" value="Trp_synth_beta"/>
</dbReference>
<dbReference type="InterPro" id="IPR023026">
    <property type="entry name" value="Trp_synth_beta/beta-like"/>
</dbReference>
<dbReference type="InterPro" id="IPR001926">
    <property type="entry name" value="TrpB-like_PALP"/>
</dbReference>
<dbReference type="InterPro" id="IPR036052">
    <property type="entry name" value="TrpB-like_PALP_sf"/>
</dbReference>
<dbReference type="NCBIfam" id="TIGR00263">
    <property type="entry name" value="trpB"/>
    <property type="match status" value="1"/>
</dbReference>
<dbReference type="PANTHER" id="PTHR48077:SF3">
    <property type="entry name" value="TRYPTOPHAN SYNTHASE"/>
    <property type="match status" value="1"/>
</dbReference>
<dbReference type="PANTHER" id="PTHR48077">
    <property type="entry name" value="TRYPTOPHAN SYNTHASE-RELATED"/>
    <property type="match status" value="1"/>
</dbReference>
<dbReference type="Pfam" id="PF00291">
    <property type="entry name" value="PALP"/>
    <property type="match status" value="1"/>
</dbReference>
<dbReference type="PIRSF" id="PIRSF001413">
    <property type="entry name" value="Trp_syn_beta"/>
    <property type="match status" value="1"/>
</dbReference>
<dbReference type="SUPFAM" id="SSF53686">
    <property type="entry name" value="Tryptophan synthase beta subunit-like PLP-dependent enzymes"/>
    <property type="match status" value="1"/>
</dbReference>
<dbReference type="PROSITE" id="PS00168">
    <property type="entry name" value="TRP_SYNTHASE_BETA"/>
    <property type="match status" value="1"/>
</dbReference>
<comment type="function">
    <text evidence="1">The beta subunit is responsible for the synthesis of L-tryptophan from indole and L-serine.</text>
</comment>
<comment type="catalytic activity">
    <reaction>
        <text>(1S,2R)-1-C-(indol-3-yl)glycerol 3-phosphate + L-serine = D-glyceraldehyde 3-phosphate + L-tryptophan + H2O</text>
        <dbReference type="Rhea" id="RHEA:10532"/>
        <dbReference type="ChEBI" id="CHEBI:15377"/>
        <dbReference type="ChEBI" id="CHEBI:33384"/>
        <dbReference type="ChEBI" id="CHEBI:57912"/>
        <dbReference type="ChEBI" id="CHEBI:58866"/>
        <dbReference type="ChEBI" id="CHEBI:59776"/>
        <dbReference type="EC" id="4.2.1.20"/>
    </reaction>
</comment>
<comment type="cofactor">
    <cofactor evidence="1">
        <name>pyridoxal 5'-phosphate</name>
        <dbReference type="ChEBI" id="CHEBI:597326"/>
    </cofactor>
</comment>
<comment type="pathway">
    <text>Amino-acid biosynthesis; L-tryptophan biosynthesis; L-tryptophan from chorismate: step 5/5.</text>
</comment>
<comment type="subunit">
    <text evidence="1">Tetramer of two alpha and two beta chains.</text>
</comment>
<comment type="similarity">
    <text evidence="2">Belongs to the TrpB family.</text>
</comment>
<feature type="chain" id="PRO_0000098976" description="Tryptophan synthase beta chain">
    <location>
        <begin position="1"/>
        <end position="402"/>
    </location>
</feature>
<feature type="modified residue" description="N6-(pyridoxal phosphate)lysine" evidence="1">
    <location>
        <position position="88"/>
    </location>
</feature>
<feature type="sequence conflict" description="In Ref. 1; AAC43609." evidence="2" ref="1">
    <original>T</original>
    <variation>TT</variation>
    <location>
        <position position="120"/>
    </location>
</feature>
<feature type="sequence conflict" description="In Ref. 1; AAC43609." evidence="2" ref="1">
    <original>Q</original>
    <variation>E</variation>
    <location>
        <position position="324"/>
    </location>
</feature>
<feature type="sequence conflict" description="In Ref. 1; AAC43609." evidence="2" ref="1">
    <original>Q</original>
    <variation>E</variation>
    <location>
        <position position="338"/>
    </location>
</feature>
<feature type="sequence conflict" description="In Ref. 1; AAC43609." evidence="2" ref="1">
    <original>H</original>
    <variation>D</variation>
    <location>
        <position position="343"/>
    </location>
</feature>
<feature type="sequence conflict" description="In Ref. 1; AAC43609." evidence="2" ref="1">
    <original>QP</original>
    <variation>HA</variation>
    <location>
        <begin position="366"/>
        <end position="367"/>
    </location>
</feature>
<feature type="sequence conflict" description="In Ref. 1; AAC43609." evidence="2" ref="1">
    <original>Y</original>
    <variation>H</variation>
    <location>
        <position position="399"/>
    </location>
</feature>
<proteinExistence type="inferred from homology"/>
<sequence>MSETLLNPYFGEFGGMYVPEILMPVLKNLEKAFVEAQQDPTFKETFLDLLKNYAGRPTALTRCRNLTQGSKTKLYLKREDLLHGGAHKTNQVLGQILLAKRMGKTRIIAETGAGQHGVATALACAMLGMPCQIYMGAKDVERQSPNVFRMRLMGANVTAVTKGSASLKDACCEAMRDWAENYEHTHYLLGTAAGPHPFPTIVREFQKIIGEETKQQILAREGRLPDAVIAAVGGGSNAIGMFNDFIEETSVRLIGVEPAGKGIATGQHGAPLGHGTTGIYFGMKAPLMQTPDGQIEESYSISAGLDFPSVGPQHAHLQAIGRAQYESITDDEALSAFQALARHEGIIPALESAHALAYALKLIQRQPEKEQLLVVNLSGRGDKDIFTVDRILSQKGVSYAPF</sequence>
<evidence type="ECO:0000250" key="1"/>
<evidence type="ECO:0000305" key="2"/>
<reference key="1">
    <citation type="journal article" date="1996" name="Microbiology">
        <title>Identification of Pasteurella multocida tryptophan synthase beta-subunit by antisera against strain P1059.</title>
        <authorList>
            <person name="Jablonski P.E."/>
            <person name="Jablonski L.M."/>
            <person name="Pintado O."/>
            <person name="Sriranganathan N."/>
            <person name="Hovde C.J."/>
        </authorList>
    </citation>
    <scope>NUCLEOTIDE SEQUENCE [GENOMIC DNA]</scope>
    <source>
        <strain>ATCC 15742 / P1059</strain>
    </source>
</reference>
<reference key="2">
    <citation type="journal article" date="2001" name="Proc. Natl. Acad. Sci. U.S.A.">
        <title>Complete genomic sequence of Pasteurella multocida Pm70.</title>
        <authorList>
            <person name="May B.J."/>
            <person name="Zhang Q."/>
            <person name="Li L.L."/>
            <person name="Paustian M.L."/>
            <person name="Whittam T.S."/>
            <person name="Kapur V."/>
        </authorList>
    </citation>
    <scope>NUCLEOTIDE SEQUENCE [LARGE SCALE GENOMIC DNA]</scope>
    <source>
        <strain>Pm70</strain>
    </source>
</reference>
<gene>
    <name type="primary">trpB</name>
    <name type="ordered locus">PM0578</name>
</gene>
<name>TRPB_PASMU</name>
<protein>
    <recommendedName>
        <fullName>Tryptophan synthase beta chain</fullName>
        <ecNumber>4.2.1.20</ecNumber>
    </recommendedName>
</protein>
<keyword id="KW-0028">Amino-acid biosynthesis</keyword>
<keyword id="KW-0057">Aromatic amino acid biosynthesis</keyword>
<keyword id="KW-0456">Lyase</keyword>
<keyword id="KW-0663">Pyridoxal phosphate</keyword>
<keyword id="KW-1185">Reference proteome</keyword>
<keyword id="KW-0822">Tryptophan biosynthesis</keyword>
<accession>P54203</accession>